<sequence>MAKQKIRIRLKAFDHSLLDQSALKIVETAKTTGAKVAGPVPLPTEKDIVTILRAPHKYKDAREQFEIRTHKRLIDIISPSPKTVDALMRLDLPAGVDIEIKL</sequence>
<feature type="chain" id="PRO_1000127105" description="Small ribosomal subunit protein uS10">
    <location>
        <begin position="1"/>
        <end position="102"/>
    </location>
</feature>
<reference key="1">
    <citation type="journal article" date="2007" name="PLoS ONE">
        <title>Analysis of the neurotoxin complex genes in Clostridium botulinum A1-A4 and B1 strains: BoNT/A3, /Ba4 and /B1 clusters are located within plasmids.</title>
        <authorList>
            <person name="Smith T.J."/>
            <person name="Hill K.K."/>
            <person name="Foley B.T."/>
            <person name="Detter J.C."/>
            <person name="Munk A.C."/>
            <person name="Bruce D.C."/>
            <person name="Doggett N.A."/>
            <person name="Smith L.A."/>
            <person name="Marks J.D."/>
            <person name="Xie G."/>
            <person name="Brettin T.S."/>
        </authorList>
    </citation>
    <scope>NUCLEOTIDE SEQUENCE [LARGE SCALE GENOMIC DNA]</scope>
    <source>
        <strain>Okra / Type B1</strain>
    </source>
</reference>
<proteinExistence type="inferred from homology"/>
<name>RS10_CLOBK</name>
<comment type="function">
    <text evidence="1">Involved in the binding of tRNA to the ribosomes.</text>
</comment>
<comment type="subunit">
    <text evidence="1">Part of the 30S ribosomal subunit.</text>
</comment>
<comment type="similarity">
    <text evidence="1">Belongs to the universal ribosomal protein uS10 family.</text>
</comment>
<organism>
    <name type="scientific">Clostridium botulinum (strain Okra / Type B1)</name>
    <dbReference type="NCBI Taxonomy" id="498213"/>
    <lineage>
        <taxon>Bacteria</taxon>
        <taxon>Bacillati</taxon>
        <taxon>Bacillota</taxon>
        <taxon>Clostridia</taxon>
        <taxon>Eubacteriales</taxon>
        <taxon>Clostridiaceae</taxon>
        <taxon>Clostridium</taxon>
    </lineage>
</organism>
<protein>
    <recommendedName>
        <fullName evidence="1">Small ribosomal subunit protein uS10</fullName>
    </recommendedName>
    <alternativeName>
        <fullName evidence="2">30S ribosomal protein S10</fullName>
    </alternativeName>
</protein>
<gene>
    <name evidence="1" type="primary">rpsJ</name>
    <name type="ordered locus">CLD_1023</name>
</gene>
<keyword id="KW-0687">Ribonucleoprotein</keyword>
<keyword id="KW-0689">Ribosomal protein</keyword>
<evidence type="ECO:0000255" key="1">
    <source>
        <dbReference type="HAMAP-Rule" id="MF_00508"/>
    </source>
</evidence>
<evidence type="ECO:0000305" key="2"/>
<accession>B1IGF5</accession>
<dbReference type="EMBL" id="CP000939">
    <property type="protein sequence ID" value="ACA45259.1"/>
    <property type="molecule type" value="Genomic_DNA"/>
</dbReference>
<dbReference type="RefSeq" id="WP_003357250.1">
    <property type="nucleotide sequence ID" value="NC_010516.1"/>
</dbReference>
<dbReference type="SMR" id="B1IGF5"/>
<dbReference type="GeneID" id="92940251"/>
<dbReference type="KEGG" id="cbb:CLD_1023"/>
<dbReference type="HOGENOM" id="CLU_122625_1_3_9"/>
<dbReference type="Proteomes" id="UP000008541">
    <property type="component" value="Chromosome"/>
</dbReference>
<dbReference type="GO" id="GO:1990904">
    <property type="term" value="C:ribonucleoprotein complex"/>
    <property type="evidence" value="ECO:0007669"/>
    <property type="project" value="UniProtKB-KW"/>
</dbReference>
<dbReference type="GO" id="GO:0005840">
    <property type="term" value="C:ribosome"/>
    <property type="evidence" value="ECO:0007669"/>
    <property type="project" value="UniProtKB-KW"/>
</dbReference>
<dbReference type="GO" id="GO:0003735">
    <property type="term" value="F:structural constituent of ribosome"/>
    <property type="evidence" value="ECO:0007669"/>
    <property type="project" value="InterPro"/>
</dbReference>
<dbReference type="GO" id="GO:0000049">
    <property type="term" value="F:tRNA binding"/>
    <property type="evidence" value="ECO:0007669"/>
    <property type="project" value="UniProtKB-UniRule"/>
</dbReference>
<dbReference type="GO" id="GO:0006412">
    <property type="term" value="P:translation"/>
    <property type="evidence" value="ECO:0007669"/>
    <property type="project" value="UniProtKB-UniRule"/>
</dbReference>
<dbReference type="FunFam" id="3.30.70.600:FF:000001">
    <property type="entry name" value="30S ribosomal protein S10"/>
    <property type="match status" value="1"/>
</dbReference>
<dbReference type="Gene3D" id="3.30.70.600">
    <property type="entry name" value="Ribosomal protein S10 domain"/>
    <property type="match status" value="1"/>
</dbReference>
<dbReference type="HAMAP" id="MF_00508">
    <property type="entry name" value="Ribosomal_uS10"/>
    <property type="match status" value="1"/>
</dbReference>
<dbReference type="InterPro" id="IPR001848">
    <property type="entry name" value="Ribosomal_uS10"/>
</dbReference>
<dbReference type="InterPro" id="IPR018268">
    <property type="entry name" value="Ribosomal_uS10_CS"/>
</dbReference>
<dbReference type="InterPro" id="IPR027486">
    <property type="entry name" value="Ribosomal_uS10_dom"/>
</dbReference>
<dbReference type="InterPro" id="IPR036838">
    <property type="entry name" value="Ribosomal_uS10_dom_sf"/>
</dbReference>
<dbReference type="NCBIfam" id="NF001861">
    <property type="entry name" value="PRK00596.1"/>
    <property type="match status" value="1"/>
</dbReference>
<dbReference type="NCBIfam" id="TIGR01049">
    <property type="entry name" value="rpsJ_bact"/>
    <property type="match status" value="1"/>
</dbReference>
<dbReference type="PANTHER" id="PTHR11700">
    <property type="entry name" value="30S RIBOSOMAL PROTEIN S10 FAMILY MEMBER"/>
    <property type="match status" value="1"/>
</dbReference>
<dbReference type="Pfam" id="PF00338">
    <property type="entry name" value="Ribosomal_S10"/>
    <property type="match status" value="1"/>
</dbReference>
<dbReference type="PRINTS" id="PR00971">
    <property type="entry name" value="RIBOSOMALS10"/>
</dbReference>
<dbReference type="SMART" id="SM01403">
    <property type="entry name" value="Ribosomal_S10"/>
    <property type="match status" value="1"/>
</dbReference>
<dbReference type="SUPFAM" id="SSF54999">
    <property type="entry name" value="Ribosomal protein S10"/>
    <property type="match status" value="1"/>
</dbReference>
<dbReference type="PROSITE" id="PS00361">
    <property type="entry name" value="RIBOSOMAL_S10"/>
    <property type="match status" value="1"/>
</dbReference>